<protein>
    <recommendedName>
        <fullName evidence="1">Rhamnulokinase</fullName>
        <shortName evidence="1">RhaB</shortName>
        <ecNumber evidence="1">2.7.1.5</ecNumber>
    </recommendedName>
    <alternativeName>
        <fullName evidence="1">ATP:L-rhamnulose phosphotransferase</fullName>
    </alternativeName>
    <alternativeName>
        <fullName evidence="1">L-rhamnulose 1-kinase</fullName>
    </alternativeName>
    <alternativeName>
        <fullName evidence="1">Rhamnulose kinase</fullName>
    </alternativeName>
</protein>
<gene>
    <name evidence="1" type="primary">rhaB</name>
    <name type="ordered locus">Ecok1_38770</name>
    <name type="ORF">APECO1_2564</name>
</gene>
<proteinExistence type="inferred from homology"/>
<organism>
    <name type="scientific">Escherichia coli O1:K1 / APEC</name>
    <dbReference type="NCBI Taxonomy" id="405955"/>
    <lineage>
        <taxon>Bacteria</taxon>
        <taxon>Pseudomonadati</taxon>
        <taxon>Pseudomonadota</taxon>
        <taxon>Gammaproteobacteria</taxon>
        <taxon>Enterobacterales</taxon>
        <taxon>Enterobacteriaceae</taxon>
        <taxon>Escherichia</taxon>
    </lineage>
</organism>
<dbReference type="EC" id="2.7.1.5" evidence="1"/>
<dbReference type="EMBL" id="CP000468">
    <property type="protein sequence ID" value="ABJ03371.1"/>
    <property type="molecule type" value="Genomic_DNA"/>
</dbReference>
<dbReference type="RefSeq" id="WP_000144110.1">
    <property type="nucleotide sequence ID" value="NZ_CADILS010000014.1"/>
</dbReference>
<dbReference type="SMR" id="A1AI81"/>
<dbReference type="KEGG" id="ecv:APECO1_2564"/>
<dbReference type="HOGENOM" id="CLU_039395_0_0_6"/>
<dbReference type="UniPathway" id="UPA00541">
    <property type="reaction ID" value="UER00602"/>
</dbReference>
<dbReference type="Proteomes" id="UP000008216">
    <property type="component" value="Chromosome"/>
</dbReference>
<dbReference type="GO" id="GO:0005829">
    <property type="term" value="C:cytosol"/>
    <property type="evidence" value="ECO:0007669"/>
    <property type="project" value="TreeGrafter"/>
</dbReference>
<dbReference type="GO" id="GO:0005524">
    <property type="term" value="F:ATP binding"/>
    <property type="evidence" value="ECO:0007669"/>
    <property type="project" value="UniProtKB-KW"/>
</dbReference>
<dbReference type="GO" id="GO:0004370">
    <property type="term" value="F:glycerol kinase activity"/>
    <property type="evidence" value="ECO:0007669"/>
    <property type="project" value="TreeGrafter"/>
</dbReference>
<dbReference type="GO" id="GO:0008993">
    <property type="term" value="F:rhamnulokinase activity"/>
    <property type="evidence" value="ECO:0007669"/>
    <property type="project" value="UniProtKB-UniRule"/>
</dbReference>
<dbReference type="GO" id="GO:0006071">
    <property type="term" value="P:glycerol metabolic process"/>
    <property type="evidence" value="ECO:0007669"/>
    <property type="project" value="TreeGrafter"/>
</dbReference>
<dbReference type="GO" id="GO:0019301">
    <property type="term" value="P:rhamnose catabolic process"/>
    <property type="evidence" value="ECO:0007669"/>
    <property type="project" value="UniProtKB-UniRule"/>
</dbReference>
<dbReference type="CDD" id="cd07771">
    <property type="entry name" value="ASKHA_NBD_FGGY_RhaB-like"/>
    <property type="match status" value="1"/>
</dbReference>
<dbReference type="FunFam" id="3.30.420.40:FF:000064">
    <property type="entry name" value="Rhamnulokinase"/>
    <property type="match status" value="1"/>
</dbReference>
<dbReference type="FunFam" id="3.30.420.40:FF:000073">
    <property type="entry name" value="Rhamnulokinase"/>
    <property type="match status" value="1"/>
</dbReference>
<dbReference type="Gene3D" id="3.30.420.40">
    <property type="match status" value="2"/>
</dbReference>
<dbReference type="HAMAP" id="MF_01535">
    <property type="entry name" value="Rhamnulokinase"/>
    <property type="match status" value="1"/>
</dbReference>
<dbReference type="InterPro" id="IPR043129">
    <property type="entry name" value="ATPase_NBD"/>
</dbReference>
<dbReference type="InterPro" id="IPR018485">
    <property type="entry name" value="FGGY_C"/>
</dbReference>
<dbReference type="InterPro" id="IPR018484">
    <property type="entry name" value="FGGY_N"/>
</dbReference>
<dbReference type="InterPro" id="IPR013449">
    <property type="entry name" value="Rhamnulokinase"/>
</dbReference>
<dbReference type="NCBIfam" id="NF007925">
    <property type="entry name" value="PRK10640.1"/>
    <property type="match status" value="1"/>
</dbReference>
<dbReference type="NCBIfam" id="TIGR02627">
    <property type="entry name" value="rhamnulo_kin"/>
    <property type="match status" value="1"/>
</dbReference>
<dbReference type="PANTHER" id="PTHR10196:SF93">
    <property type="entry name" value="L-RHAMNULOKINASE"/>
    <property type="match status" value="1"/>
</dbReference>
<dbReference type="PANTHER" id="PTHR10196">
    <property type="entry name" value="SUGAR KINASE"/>
    <property type="match status" value="1"/>
</dbReference>
<dbReference type="Pfam" id="PF02782">
    <property type="entry name" value="FGGY_C"/>
    <property type="match status" value="1"/>
</dbReference>
<dbReference type="Pfam" id="PF00370">
    <property type="entry name" value="FGGY_N"/>
    <property type="match status" value="1"/>
</dbReference>
<dbReference type="SUPFAM" id="SSF53067">
    <property type="entry name" value="Actin-like ATPase domain"/>
    <property type="match status" value="2"/>
</dbReference>
<reference key="1">
    <citation type="journal article" date="2007" name="J. Bacteriol.">
        <title>The genome sequence of avian pathogenic Escherichia coli strain O1:K1:H7 shares strong similarities with human extraintestinal pathogenic E. coli genomes.</title>
        <authorList>
            <person name="Johnson T.J."/>
            <person name="Kariyawasam S."/>
            <person name="Wannemuehler Y."/>
            <person name="Mangiamele P."/>
            <person name="Johnson S.J."/>
            <person name="Doetkott C."/>
            <person name="Skyberg J.A."/>
            <person name="Lynne A.M."/>
            <person name="Johnson J.R."/>
            <person name="Nolan L.K."/>
        </authorList>
    </citation>
    <scope>NUCLEOTIDE SEQUENCE [LARGE SCALE GENOMIC DNA]</scope>
</reference>
<keyword id="KW-0067">ATP-binding</keyword>
<keyword id="KW-1015">Disulfide bond</keyword>
<keyword id="KW-0418">Kinase</keyword>
<keyword id="KW-0460">Magnesium</keyword>
<keyword id="KW-0547">Nucleotide-binding</keyword>
<keyword id="KW-1185">Reference proteome</keyword>
<keyword id="KW-0684">Rhamnose metabolism</keyword>
<keyword id="KW-0808">Transferase</keyword>
<evidence type="ECO:0000255" key="1">
    <source>
        <dbReference type="HAMAP-Rule" id="MF_01535"/>
    </source>
</evidence>
<feature type="chain" id="PRO_0000297520" description="Rhamnulokinase">
    <location>
        <begin position="1"/>
        <end position="489"/>
    </location>
</feature>
<feature type="active site" description="Proton acceptor" evidence="1">
    <location>
        <position position="237"/>
    </location>
</feature>
<feature type="binding site" evidence="1">
    <location>
        <begin position="13"/>
        <end position="17"/>
    </location>
    <ligand>
        <name>ATP</name>
        <dbReference type="ChEBI" id="CHEBI:30616"/>
    </ligand>
</feature>
<feature type="binding site" evidence="1">
    <location>
        <position position="83"/>
    </location>
    <ligand>
        <name>substrate</name>
    </ligand>
</feature>
<feature type="binding site" evidence="1">
    <location>
        <begin position="236"/>
        <end position="238"/>
    </location>
    <ligand>
        <name>substrate</name>
    </ligand>
</feature>
<feature type="binding site" evidence="1">
    <location>
        <position position="259"/>
    </location>
    <ligand>
        <name>ATP</name>
        <dbReference type="ChEBI" id="CHEBI:30616"/>
    </ligand>
</feature>
<feature type="binding site" evidence="1">
    <location>
        <position position="296"/>
    </location>
    <ligand>
        <name>substrate</name>
    </ligand>
</feature>
<feature type="binding site" evidence="1">
    <location>
        <position position="304"/>
    </location>
    <ligand>
        <name>ATP</name>
        <dbReference type="ChEBI" id="CHEBI:30616"/>
    </ligand>
</feature>
<feature type="binding site" evidence="1">
    <location>
        <position position="402"/>
    </location>
    <ligand>
        <name>ATP</name>
        <dbReference type="ChEBI" id="CHEBI:30616"/>
    </ligand>
</feature>
<feature type="disulfide bond" evidence="1">
    <location>
        <begin position="68"/>
        <end position="222"/>
    </location>
</feature>
<feature type="disulfide bond" evidence="1">
    <location>
        <begin position="353"/>
        <end position="370"/>
    </location>
</feature>
<feature type="disulfide bond" evidence="1">
    <location>
        <begin position="413"/>
        <end position="417"/>
    </location>
</feature>
<comment type="function">
    <text evidence="1">Involved in the catabolism of L-rhamnose (6-deoxy-L-mannose). Catalyzes the transfer of the gamma-phosphate group from ATP to the 1-hydroxyl group of L-rhamnulose to yield L-rhamnulose 1-phosphate.</text>
</comment>
<comment type="catalytic activity">
    <reaction evidence="1">
        <text>L-rhamnulose + ATP = L-rhamnulose 1-phosphate + ADP + H(+)</text>
        <dbReference type="Rhea" id="RHEA:20117"/>
        <dbReference type="ChEBI" id="CHEBI:15378"/>
        <dbReference type="ChEBI" id="CHEBI:17897"/>
        <dbReference type="ChEBI" id="CHEBI:30616"/>
        <dbReference type="ChEBI" id="CHEBI:58313"/>
        <dbReference type="ChEBI" id="CHEBI:456216"/>
        <dbReference type="EC" id="2.7.1.5"/>
    </reaction>
</comment>
<comment type="cofactor">
    <cofactor evidence="1">
        <name>Mg(2+)</name>
        <dbReference type="ChEBI" id="CHEBI:18420"/>
    </cofactor>
</comment>
<comment type="pathway">
    <text evidence="1">Carbohydrate degradation; L-rhamnose degradation; glycerone phosphate from L-rhamnose: step 2/3.</text>
</comment>
<comment type="subunit">
    <text evidence="1">Monomer.</text>
</comment>
<comment type="similarity">
    <text evidence="1">Belongs to the rhamnulokinase family.</text>
</comment>
<name>RHAB_ECOK1</name>
<sequence length="489" mass="54076">MTFRNCVAVDLGASSGRVMLARYERECRSLTLREIHRFNNGLHSQNGYVTWNVDSLESAIRLGLNKVCEEGIRIDSIGIDTWGVDFVLLDQQGQRVGLPVAYRDSRTNGLMAQAQQQLGKRDIYQRSGIQFLPFNTIYQLRALTEQQPELIPHIAHALLIPDYFSYRLTGKMNWEYTNATTTQLVNINSDDWDESLLAWSGANKAWFGRPTHPGNVIGHWICPQGNEIPVVAVASHDTASAVIASPLNGSRAAYLSSGTWSLMGFESQTPFTNDTALAANITNEGGAEGRYRVLKNIMGLWLLQRVLQERQINDLPALIAATQALPACRFIINPNDDRFINPDEMCSEIQAACRETAQPIPESDAELARCIFDSLALLYADVLHELAQLRGEDFSQLHIVGGGCQNTLLNQLCADACGIRVIAGPVEASTLGNIGIQLMTLDELNNVDDFRQVVSTTANLTTFTPNPDSEIAHYVAQIHSTRQTKELCA</sequence>
<accession>A1AI81</accession>